<name>IGHG1_RAT</name>
<feature type="chain" id="PRO_0000153591" description="Ig gamma-1 chain C region">
    <location>
        <begin position="1" status="less than"/>
        <end position="326"/>
    </location>
</feature>
<feature type="region of interest" description="CH1">
    <location>
        <begin position="1"/>
        <end position="97"/>
    </location>
</feature>
<feature type="region of interest" description="Hinge">
    <location>
        <begin position="98"/>
        <end position="112"/>
    </location>
</feature>
<feature type="region of interest" description="CH2">
    <location>
        <begin position="113"/>
        <end position="219"/>
    </location>
</feature>
<feature type="region of interest" description="CH3">
    <location>
        <begin position="220"/>
        <end position="326"/>
    </location>
</feature>
<feature type="glycosylation site" description="N-linked (GlcNAc...) asparagine" evidence="1">
    <location>
        <position position="176"/>
    </location>
</feature>
<feature type="disulfide bond" evidence="2">
    <location>
        <begin position="27"/>
        <end position="82"/>
    </location>
</feature>
<feature type="disulfide bond" description="Interchain (with a heavy chain)" evidence="2">
    <location>
        <position position="102"/>
    </location>
</feature>
<feature type="disulfide bond" description="Interchain (with a heavy chain)" evidence="2">
    <location>
        <position position="106"/>
    </location>
</feature>
<feature type="disulfide bond" description="Interchain (with a heavy chain)" evidence="2">
    <location>
        <position position="109"/>
    </location>
</feature>
<feature type="disulfide bond" description="Interchain (with a heavy chain)" evidence="2">
    <location>
        <position position="111"/>
    </location>
</feature>
<feature type="disulfide bond" evidence="2">
    <location>
        <begin position="140"/>
        <end position="200"/>
    </location>
</feature>
<feature type="disulfide bond" evidence="2">
    <location>
        <begin position="246"/>
        <end position="304"/>
    </location>
</feature>
<feature type="non-terminal residue">
    <location>
        <position position="1"/>
    </location>
</feature>
<feature type="strand" evidence="3">
    <location>
        <begin position="7"/>
        <end position="11"/>
    </location>
</feature>
<feature type="strand" evidence="3">
    <location>
        <begin position="21"/>
        <end position="35"/>
    </location>
</feature>
<feature type="strand" evidence="3">
    <location>
        <begin position="38"/>
        <end position="41"/>
    </location>
</feature>
<feature type="helix" evidence="3">
    <location>
        <begin position="42"/>
        <end position="44"/>
    </location>
</feature>
<feature type="strand" evidence="3">
    <location>
        <begin position="50"/>
        <end position="52"/>
    </location>
</feature>
<feature type="strand" evidence="3">
    <location>
        <begin position="56"/>
        <end position="58"/>
    </location>
</feature>
<feature type="strand" evidence="3">
    <location>
        <begin position="61"/>
        <end position="71"/>
    </location>
</feature>
<feature type="helix" evidence="3">
    <location>
        <begin position="72"/>
        <end position="74"/>
    </location>
</feature>
<feature type="turn" evidence="3">
    <location>
        <begin position="75"/>
        <end position="77"/>
    </location>
</feature>
<feature type="strand" evidence="3">
    <location>
        <begin position="81"/>
        <end position="86"/>
    </location>
</feature>
<feature type="helix" evidence="3">
    <location>
        <begin position="87"/>
        <end position="89"/>
    </location>
</feature>
<feature type="strand" evidence="3">
    <location>
        <begin position="91"/>
        <end position="96"/>
    </location>
</feature>
<keyword id="KW-0002">3D-structure</keyword>
<keyword id="KW-1015">Disulfide bond</keyword>
<keyword id="KW-0325">Glycoprotein</keyword>
<keyword id="KW-0393">Immunoglobulin domain</keyword>
<keyword id="KW-1185">Reference proteome</keyword>
<dbReference type="PIR" id="PS0017">
    <property type="entry name" value="PS0017"/>
</dbReference>
<dbReference type="PDB" id="1LK3">
    <property type="method" value="X-ray"/>
    <property type="resolution" value="1.91 A"/>
    <property type="chains" value="H/I=1-100"/>
</dbReference>
<dbReference type="PDBsum" id="1LK3"/>
<dbReference type="SMR" id="P20759"/>
<dbReference type="FunCoup" id="P20759">
    <property type="interactions" value="45"/>
</dbReference>
<dbReference type="MINT" id="P20759"/>
<dbReference type="STRING" id="10116.ENSRNOP00000006975"/>
<dbReference type="GlyGen" id="P20759">
    <property type="glycosylation" value="1 site"/>
</dbReference>
<dbReference type="SwissPalm" id="P20759"/>
<dbReference type="PaxDb" id="10116-ENSRNOP00000006975"/>
<dbReference type="ABCD" id="P20759">
    <property type="antibodies" value="6 sequenced antibodies"/>
</dbReference>
<dbReference type="Ensembl" id="ENSRNOT00000006975.6">
    <property type="protein sequence ID" value="ENSRNOP00000006975.5"/>
    <property type="gene ID" value="ENSRNOG00000030332.4"/>
</dbReference>
<dbReference type="AGR" id="RGD:1359539"/>
<dbReference type="eggNOG" id="ENOG502R54U">
    <property type="taxonomic scope" value="Eukaryota"/>
</dbReference>
<dbReference type="GeneTree" id="ENSGT00940000163307"/>
<dbReference type="HOGENOM" id="CLU_030625_0_2_1"/>
<dbReference type="InParanoid" id="P20759"/>
<dbReference type="OMA" id="DENCAEA"/>
<dbReference type="PhylomeDB" id="P20759"/>
<dbReference type="Reactome" id="R-RNO-166663">
    <property type="pathway name" value="Initial triggering of complement"/>
</dbReference>
<dbReference type="Reactome" id="R-RNO-173623">
    <property type="pathway name" value="Classical antibody-mediated complement activation"/>
</dbReference>
<dbReference type="Reactome" id="R-RNO-2029481">
    <property type="pathway name" value="FCGR activation"/>
</dbReference>
<dbReference type="Reactome" id="R-RNO-2029482">
    <property type="pathway name" value="Regulation of actin dynamics for phagocytic cup formation"/>
</dbReference>
<dbReference type="Reactome" id="R-RNO-2029485">
    <property type="pathway name" value="Role of phospholipids in phagocytosis"/>
</dbReference>
<dbReference type="Reactome" id="R-RNO-977606">
    <property type="pathway name" value="Regulation of Complement cascade"/>
</dbReference>
<dbReference type="EvolutionaryTrace" id="P20759"/>
<dbReference type="Proteomes" id="UP000002494">
    <property type="component" value="Chromosome 6"/>
</dbReference>
<dbReference type="Bgee" id="ENSRNOG00000030332">
    <property type="expression patterns" value="Expressed in spleen and 8 other cell types or tissues"/>
</dbReference>
<dbReference type="GO" id="GO:0042571">
    <property type="term" value="C:immunoglobulin complex, circulating"/>
    <property type="evidence" value="ECO:0000318"/>
    <property type="project" value="GO_Central"/>
</dbReference>
<dbReference type="GO" id="GO:0003823">
    <property type="term" value="F:antigen binding"/>
    <property type="evidence" value="ECO:0000318"/>
    <property type="project" value="GO_Central"/>
</dbReference>
<dbReference type="GO" id="GO:0034987">
    <property type="term" value="F:immunoglobulin receptor binding"/>
    <property type="evidence" value="ECO:0000318"/>
    <property type="project" value="GO_Central"/>
</dbReference>
<dbReference type="GO" id="GO:0019731">
    <property type="term" value="P:antibacterial humoral response"/>
    <property type="evidence" value="ECO:0000318"/>
    <property type="project" value="GO_Central"/>
</dbReference>
<dbReference type="GO" id="GO:0006958">
    <property type="term" value="P:complement activation, classical pathway"/>
    <property type="evidence" value="ECO:0000318"/>
    <property type="project" value="GO_Central"/>
</dbReference>
<dbReference type="CDD" id="cd21817">
    <property type="entry name" value="IgC1_CH1_IgEG"/>
    <property type="match status" value="1"/>
</dbReference>
<dbReference type="CDD" id="cd05768">
    <property type="entry name" value="IgC1_CH3_IgAGD_CH4_IgAEM"/>
    <property type="match status" value="1"/>
</dbReference>
<dbReference type="FunFam" id="2.60.40.10:FF:001739">
    <property type="entry name" value="Ig gamma-2A chain C region"/>
    <property type="match status" value="1"/>
</dbReference>
<dbReference type="FunFam" id="2.60.40.10:FF:000463">
    <property type="entry name" value="Immunoglobulin heavy constant gamma 1"/>
    <property type="match status" value="1"/>
</dbReference>
<dbReference type="FunFam" id="2.60.40.10:FF:001129">
    <property type="entry name" value="Immunoglobulin heavy constant gamma 1"/>
    <property type="match status" value="1"/>
</dbReference>
<dbReference type="Gene3D" id="2.60.40.10">
    <property type="entry name" value="Immunoglobulins"/>
    <property type="match status" value="3"/>
</dbReference>
<dbReference type="InterPro" id="IPR007110">
    <property type="entry name" value="Ig-like_dom"/>
</dbReference>
<dbReference type="InterPro" id="IPR036179">
    <property type="entry name" value="Ig-like_dom_sf"/>
</dbReference>
<dbReference type="InterPro" id="IPR013783">
    <property type="entry name" value="Ig-like_fold"/>
</dbReference>
<dbReference type="InterPro" id="IPR003597">
    <property type="entry name" value="Ig_C1-set"/>
</dbReference>
<dbReference type="InterPro" id="IPR050380">
    <property type="entry name" value="Immune_Resp_Modulators"/>
</dbReference>
<dbReference type="PANTHER" id="PTHR23411">
    <property type="entry name" value="TAPASIN"/>
    <property type="match status" value="1"/>
</dbReference>
<dbReference type="Pfam" id="PF07654">
    <property type="entry name" value="C1-set"/>
    <property type="match status" value="3"/>
</dbReference>
<dbReference type="SMART" id="SM00407">
    <property type="entry name" value="IGc1"/>
    <property type="match status" value="2"/>
</dbReference>
<dbReference type="SUPFAM" id="SSF48726">
    <property type="entry name" value="Immunoglobulin"/>
    <property type="match status" value="3"/>
</dbReference>
<dbReference type="PROSITE" id="PS50835">
    <property type="entry name" value="IG_LIKE"/>
    <property type="match status" value="3"/>
</dbReference>
<organism>
    <name type="scientific">Rattus norvegicus</name>
    <name type="common">Rat</name>
    <dbReference type="NCBI Taxonomy" id="10116"/>
    <lineage>
        <taxon>Eukaryota</taxon>
        <taxon>Metazoa</taxon>
        <taxon>Chordata</taxon>
        <taxon>Craniata</taxon>
        <taxon>Vertebrata</taxon>
        <taxon>Euteleostomi</taxon>
        <taxon>Mammalia</taxon>
        <taxon>Eutheria</taxon>
        <taxon>Euarchontoglires</taxon>
        <taxon>Glires</taxon>
        <taxon>Rodentia</taxon>
        <taxon>Myomorpha</taxon>
        <taxon>Muroidea</taxon>
        <taxon>Muridae</taxon>
        <taxon>Murinae</taxon>
        <taxon>Rattus</taxon>
    </lineage>
</organism>
<evidence type="ECO:0000255" key="1"/>
<evidence type="ECO:0000255" key="2">
    <source>
        <dbReference type="PROSITE-ProRule" id="PRU00114"/>
    </source>
</evidence>
<evidence type="ECO:0007829" key="3">
    <source>
        <dbReference type="PDB" id="1LK3"/>
    </source>
</evidence>
<protein>
    <recommendedName>
        <fullName>Ig gamma-1 chain C region</fullName>
    </recommendedName>
</protein>
<reference key="1">
    <citation type="journal article" date="1988" name="Gene">
        <title>Evolution of the rat immunoglobulin gamma heavy-chain gene family.</title>
        <authorList>
            <person name="Brueggemann M."/>
        </authorList>
    </citation>
    <scope>NUCLEOTIDE SEQUENCE</scope>
</reference>
<reference key="2">
    <citation type="journal article" date="1986" name="Proc. Natl. Acad. Sci. U.S.A.">
        <title>Immunoglobulin heavy chain locus of the rat: striking homology to mouse antibody genes.</title>
        <authorList>
            <person name="Bruggemann M."/>
            <person name="Free J."/>
            <person name="Diamond A."/>
            <person name="Howard J."/>
            <person name="Cobbold S."/>
            <person name="Waldmann H."/>
        </authorList>
    </citation>
    <scope>NUCLEOTIDE SEQUENCE OF 220-326</scope>
</reference>
<accession>P20759</accession>
<proteinExistence type="evidence at protein level"/>
<sequence>AETTAPSVYPLAPGTALKSNSMVTLGCLVKGYFPEPVTVTWNSGALSSGVHTFPAVLQSGLYTLTSSVTVPSSTWPSQTVTCNVAHPASSTKVDKKIVPRNCGGDCKPCICTGSEVSSVFIFPPKPKDVLTITLTPKVTCVVVDISQDDPEVHFSWFVDDVEVHTAQTRPPEEQFNSTFRSVSELPILHQDWLNGRTFRCKVTSAAFPSPIEKTISKPEGRTQVPHVYTMSPTKEEMTQNEVSITCMVKGFYPPDIYVEWQMNGQPQENYKNTPPTMDTDGSYFLYSKLNVKKEKWQQGNTFTCSVLHEGLHNHHTEKSLSHSPGK</sequence>